<sequence>MNFSTLPPEINSALIFGGAGSEPMSAAAVAWDQLAMELASAAASFNSVTSGLVGESWLGPSSAAMAAAVAPYLGWLAAAAAQAQRSATQAAALVAEFEAVRAAMVQPALVAANRSDLVSLVFSNFFGQNAPAIAAIEAAYEQMWAIDVSVMSAYHAGASAVASALTPFTAPPQNLTDLPAQLAAAPAAVVTAAITSSKGVLANLSLGLANSGFGQMGAANLGILNLGSLNPGGNNFGLGNVGSNNVGLGNTGNGNIGFGNTGNGNIGFGLTGDNQQGFGGWNSGTGNIGLFNSGTGNIGIGNTGTGNFGIGNSGTSYNTGIGNTGQANTGFFNAGIANTGIGNTGNYNTGSFNLGSFNTGDFNTGSSNTGFFNPGNLNTGVGNTGNVNTGGFNSGNYSNGFFWRGDYQGLIGFSGTLTIPAAGLDLNGLGSVGPITIPSITIPEIGLGINSSGALVGPINVPPITVPAIGLGINSTGALVGPINIPPITLNSIGLELSAFQVINVGSISIPASPLAIGLFGVNPTVGSIGPGSISIQLGTPEIPAIPPFFPGFPPDYVTVSGQIGPITFLSGGYSLPAIPLGIDVGGGLGPFTVFPDGYSLPAIPLGIDVGGGLGPFTVFPDGYSLPAIPLGIDVGGGLGPFTVFPDGYSLPAIPLGIDVGGAIGPLTTPPITIPSIPLGIDVSGSLGPINIPIEIAGTPGFGNSTTTPSSGFFNSGTGGTSGFGNVGSGGSGFWNIAGNLGNSGFLNVGPLTSGILNFGNTVSGLYNTSTLGLATSAFHSGVGNTDSQLAGFMRNAAGGTLFNFGFANDGTLNLGNANLGDYNVGSGNVGSYNFGSGNIGNGSFGFGNIGSNNFGFGNVGSNNLGFANTGPGLTEALHNIGFGNIGGNNYGFANIGNGNIGFGNTGTGNIGIGLTGDNQVGFGALNSGSGNIGFFNSGNGNIGFFNSGNGNVGIGNSGNYNTGLGNVGNANTGLFNTGNVNTGIGNAGSYNTGSYNAGDTNTGDLNPGNANTGYLNLGDLNTGWGNIGDLNTGALISGSYSNGILWRGDYQGLIGYSDTLSIPAIPLSVEVNGGIGPIVVPDITIPGIPLSLNALGGVGPIVVPDITIPGIPLSLNALGGVGPIVVPDITIPGIPLSLNALGGVGPIVVPDITIPGIPLSLNALGGVGPIVVPDITIPGIPLSLNALGGVGPITVPGVPISRIPLTINIRIPVNITLNELPFNVAGIFTGYIGPIPLSTFVLGVTLAGGTLESGIQGFSVNPFGLNIPLSGATNAVTIPGFAINPFGLNVPLSGGTSPVTIPGFAINPFGLNVPLSGGTSPVTIPGFTIPGSPLNLTANGGLGPINIPINITSAPGFGNSTTTPSSGFFNSGDGSASGFGNVGPGISGLWNQVPNALQGGVSGIYNVGQLASGVANLGNTVSGFNNTSTVGHLTAAFNSGVNNIGQMLLGFFSPGAGP</sequence>
<protein>
    <recommendedName>
        <fullName evidence="3">PPE family protein PPE34</fullName>
    </recommendedName>
</protein>
<accession>Q79FI9</accession>
<accession>I6XCU7</accession>
<accession>L0TAZ1</accession>
<evidence type="ECO:0000269" key="1">
    <source>
    </source>
</evidence>
<evidence type="ECO:0000269" key="2">
    <source>
    </source>
</evidence>
<evidence type="ECO:0000305" key="3"/>
<evidence type="ECO:0000312" key="4">
    <source>
        <dbReference type="EMBL" id="CCP44684.1"/>
    </source>
</evidence>
<organism>
    <name type="scientific">Mycobacterium tuberculosis (strain ATCC 25618 / H37Rv)</name>
    <dbReference type="NCBI Taxonomy" id="83332"/>
    <lineage>
        <taxon>Bacteria</taxon>
        <taxon>Bacillati</taxon>
        <taxon>Actinomycetota</taxon>
        <taxon>Actinomycetes</taxon>
        <taxon>Mycobacteriales</taxon>
        <taxon>Mycobacteriaceae</taxon>
        <taxon>Mycobacterium</taxon>
        <taxon>Mycobacterium tuberculosis complex</taxon>
    </lineage>
</organism>
<feature type="chain" id="PRO_0000437939" description="PPE family protein PPE34">
    <location>
        <begin position="1"/>
        <end position="1459"/>
    </location>
</feature>
<dbReference type="EMBL" id="AL123456">
    <property type="protein sequence ID" value="CCP44684.1"/>
    <property type="molecule type" value="Genomic_DNA"/>
</dbReference>
<dbReference type="RefSeq" id="WP_010886134.1">
    <property type="nucleotide sequence ID" value="NC_018143.2"/>
</dbReference>
<dbReference type="RefSeq" id="YP_177655.1">
    <property type="nucleotide sequence ID" value="NC_000962.3"/>
</dbReference>
<dbReference type="STRING" id="83332.Rv1917c"/>
<dbReference type="PaxDb" id="83332-Rv1917c"/>
<dbReference type="GeneID" id="885362"/>
<dbReference type="KEGG" id="mtu:Rv1917c"/>
<dbReference type="KEGG" id="mtv:RVBD_1917c"/>
<dbReference type="PATRIC" id="fig|83332.111.peg.2132"/>
<dbReference type="TubercuList" id="Rv1917c"/>
<dbReference type="eggNOG" id="COG5263">
    <property type="taxonomic scope" value="Bacteria"/>
</dbReference>
<dbReference type="eggNOG" id="COG5651">
    <property type="taxonomic scope" value="Bacteria"/>
</dbReference>
<dbReference type="InParanoid" id="Q79FI9"/>
<dbReference type="OrthoDB" id="4753213at2"/>
<dbReference type="PhylomeDB" id="Q79FI9"/>
<dbReference type="Proteomes" id="UP000001584">
    <property type="component" value="Chromosome"/>
</dbReference>
<dbReference type="GO" id="GO:0009986">
    <property type="term" value="C:cell surface"/>
    <property type="evidence" value="ECO:0007669"/>
    <property type="project" value="UniProtKB-SubCell"/>
</dbReference>
<dbReference type="GO" id="GO:0005576">
    <property type="term" value="C:extracellular region"/>
    <property type="evidence" value="ECO:0000314"/>
    <property type="project" value="MTBBASE"/>
</dbReference>
<dbReference type="GO" id="GO:0005886">
    <property type="term" value="C:plasma membrane"/>
    <property type="evidence" value="ECO:0007669"/>
    <property type="project" value="UniProtKB-SubCell"/>
</dbReference>
<dbReference type="GO" id="GO:0052572">
    <property type="term" value="P:response to host immune response"/>
    <property type="evidence" value="ECO:0000318"/>
    <property type="project" value="GO_Central"/>
</dbReference>
<dbReference type="GO" id="GO:0141134">
    <property type="term" value="P:symbiont-mediated activation of host signal transduction pathway via agonism of host cell surface receptor"/>
    <property type="evidence" value="ECO:0000269"/>
    <property type="project" value="SigSci"/>
</dbReference>
<dbReference type="GO" id="GO:0052553">
    <property type="term" value="P:symbiont-mediated perturbation of host immune response"/>
    <property type="evidence" value="ECO:0000314"/>
    <property type="project" value="MTBBASE"/>
</dbReference>
<dbReference type="FunFam" id="1.20.1260.20:FF:000001">
    <property type="entry name" value="PPE family protein PPE41"/>
    <property type="match status" value="1"/>
</dbReference>
<dbReference type="Gene3D" id="1.20.1260.20">
    <property type="entry name" value="PPE superfamily"/>
    <property type="match status" value="1"/>
</dbReference>
<dbReference type="InterPro" id="IPR002989">
    <property type="entry name" value="Mycobac_pentapep"/>
</dbReference>
<dbReference type="InterPro" id="IPR000030">
    <property type="entry name" value="PPE_dom"/>
</dbReference>
<dbReference type="InterPro" id="IPR038332">
    <property type="entry name" value="PPE_sf"/>
</dbReference>
<dbReference type="PANTHER" id="PTHR46766">
    <property type="entry name" value="GLUTAMINE-RICH PROTEIN 2"/>
    <property type="match status" value="1"/>
</dbReference>
<dbReference type="PANTHER" id="PTHR46766:SF1">
    <property type="entry name" value="GLUTAMINE-RICH PROTEIN 2"/>
    <property type="match status" value="1"/>
</dbReference>
<dbReference type="Pfam" id="PF01469">
    <property type="entry name" value="Pentapeptide_2"/>
    <property type="match status" value="8"/>
</dbReference>
<dbReference type="Pfam" id="PF00823">
    <property type="entry name" value="PPE"/>
    <property type="match status" value="1"/>
</dbReference>
<dbReference type="SUPFAM" id="SSF140459">
    <property type="entry name" value="PE/PPE dimer-like"/>
    <property type="match status" value="1"/>
</dbReference>
<proteinExistence type="evidence at protein level"/>
<name>PPE34_MYCTU</name>
<keyword id="KW-1003">Cell membrane</keyword>
<keyword id="KW-0134">Cell wall</keyword>
<keyword id="KW-0472">Membrane</keyword>
<keyword id="KW-1185">Reference proteome</keyword>
<keyword id="KW-0964">Secreted</keyword>
<keyword id="KW-0843">Virulence</keyword>
<comment type="function">
    <text evidence="2">Facilitates a shift in the ensuing immunity toward the Th2 phenotype and could aid in immune evasion by mycobacteria. Interacts with human Toll-like receptor 2 (TLR2) and triggers functional maturation of human dendritic cells (DCs), leading to secretion of IL-4, IL-5 and IL-10 from CD4(+) T cells and induction of Th2 immune response. Maturation of DCs involves PI3K, ERK1/2, p38 MAPK and NF-kappa-B signaling pathways.</text>
</comment>
<comment type="subunit">
    <text evidence="2">Interacts with human TLR2.</text>
</comment>
<comment type="subcellular location">
    <subcellularLocation>
        <location evidence="2">Cell membrane</location>
    </subcellularLocation>
    <subcellularLocation>
        <location evidence="1 2">Secreted</location>
        <location evidence="1 2">Cell wall</location>
    </subcellularLocation>
    <subcellularLocation>
        <location evidence="1">Cell surface</location>
    </subcellularLocation>
</comment>
<comment type="similarity">
    <text evidence="3">Belongs to the mycobacterial PPE family.</text>
</comment>
<gene>
    <name evidence="4" type="primary">PPE34</name>
    <name evidence="4" type="ordered locus">Rv1917c</name>
</gene>
<reference key="1">
    <citation type="journal article" date="1998" name="Nature">
        <title>Deciphering the biology of Mycobacterium tuberculosis from the complete genome sequence.</title>
        <authorList>
            <person name="Cole S.T."/>
            <person name="Brosch R."/>
            <person name="Parkhill J."/>
            <person name="Garnier T."/>
            <person name="Churcher C.M."/>
            <person name="Harris D.E."/>
            <person name="Gordon S.V."/>
            <person name="Eiglmeier K."/>
            <person name="Gas S."/>
            <person name="Barry C.E. III"/>
            <person name="Tekaia F."/>
            <person name="Badcock K."/>
            <person name="Basham D."/>
            <person name="Brown D."/>
            <person name="Chillingworth T."/>
            <person name="Connor R."/>
            <person name="Davies R.M."/>
            <person name="Devlin K."/>
            <person name="Feltwell T."/>
            <person name="Gentles S."/>
            <person name="Hamlin N."/>
            <person name="Holroyd S."/>
            <person name="Hornsby T."/>
            <person name="Jagels K."/>
            <person name="Krogh A."/>
            <person name="McLean J."/>
            <person name="Moule S."/>
            <person name="Murphy L.D."/>
            <person name="Oliver S."/>
            <person name="Osborne J."/>
            <person name="Quail M.A."/>
            <person name="Rajandream M.A."/>
            <person name="Rogers J."/>
            <person name="Rutter S."/>
            <person name="Seeger K."/>
            <person name="Skelton S."/>
            <person name="Squares S."/>
            <person name="Squares R."/>
            <person name="Sulston J.E."/>
            <person name="Taylor K."/>
            <person name="Whitehead S."/>
            <person name="Barrell B.G."/>
        </authorList>
    </citation>
    <scope>NUCLEOTIDE SEQUENCE [LARGE SCALE GENOMIC DNA]</scope>
    <source>
        <strain>ATCC 25618 / H37Rv</strain>
    </source>
</reference>
<reference key="2">
    <citation type="journal article" date="2001" name="Tuberculosis">
        <title>Expression, characterization and subcellular localization of the Mycobacterium tuberculosis PPE gene Rv1917c.</title>
        <authorList>
            <person name="Sampson S.L."/>
            <person name="Lukey P."/>
            <person name="Warren R.M."/>
            <person name="van Helden P.D."/>
            <person name="Richardson M."/>
            <person name="Everett M.J."/>
        </authorList>
    </citation>
    <scope>SUBCELLULAR LOCATION</scope>
    <source>
        <strain>H37Rv</strain>
    </source>
</reference>
<reference key="3">
    <citation type="journal article" date="2010" name="J. Biol. Chem.">
        <title>Src homology 3-interacting domain of Rv1917c of Mycobacterium tuberculosis induces selective maturation of human dendritic cells by regulating PI3K-MAPK-NF-kappaB signaling and drives Th2 immune responses.</title>
        <authorList>
            <person name="Bansal K."/>
            <person name="Sinha A.Y."/>
            <person name="Ghorpade D.S."/>
            <person name="Togarsimalemath S.K."/>
            <person name="Patil S.A."/>
            <person name="Kaveri S.V."/>
            <person name="Balaji K.N."/>
            <person name="Bayry J."/>
        </authorList>
    </citation>
    <scope>FUNCTION</scope>
    <scope>INTERACTION WITH TLR2</scope>
    <scope>SUBCELLULAR LOCATION</scope>
</reference>